<name>HSCB_SHEB5</name>
<gene>
    <name evidence="1" type="primary">hscB</name>
    <name type="ordered locus">Sbal_2394</name>
</gene>
<keyword id="KW-0143">Chaperone</keyword>
<keyword id="KW-1185">Reference proteome</keyword>
<feature type="chain" id="PRO_1000083034" description="Co-chaperone protein HscB homolog">
    <location>
        <begin position="1"/>
        <end position="174"/>
    </location>
</feature>
<feature type="domain" description="J" evidence="1">
    <location>
        <begin position="2"/>
        <end position="74"/>
    </location>
</feature>
<accession>A3D574</accession>
<proteinExistence type="inferred from homology"/>
<protein>
    <recommendedName>
        <fullName evidence="1">Co-chaperone protein HscB homolog</fullName>
    </recommendedName>
</protein>
<evidence type="ECO:0000255" key="1">
    <source>
        <dbReference type="HAMAP-Rule" id="MF_00682"/>
    </source>
</evidence>
<organism>
    <name type="scientific">Shewanella baltica (strain OS155 / ATCC BAA-1091)</name>
    <dbReference type="NCBI Taxonomy" id="325240"/>
    <lineage>
        <taxon>Bacteria</taxon>
        <taxon>Pseudomonadati</taxon>
        <taxon>Pseudomonadota</taxon>
        <taxon>Gammaproteobacteria</taxon>
        <taxon>Alteromonadales</taxon>
        <taxon>Shewanellaceae</taxon>
        <taxon>Shewanella</taxon>
    </lineage>
</organism>
<sequence>MNYFELFKFSPAFDIDTALLAERYRELQRAVHPDKFANDTEQQKLLSVQRTAQVNDGFQTLKDPIRRAEHMLSLRGIELSHETTTVKDTGFLMQQMEWREALEDIRDSADPQASIDALYQSFAEYRAQLTQQLTQLLTSEQAEDALLAADQVRKLKFMAKLHDELTRVEDALLD</sequence>
<comment type="function">
    <text evidence="1">Co-chaperone involved in the maturation of iron-sulfur cluster-containing proteins. Seems to help targeting proteins to be folded toward HscA.</text>
</comment>
<comment type="subunit">
    <text evidence="1">Interacts with HscA and stimulates its ATPase activity.</text>
</comment>
<comment type="similarity">
    <text evidence="1">Belongs to the HscB family.</text>
</comment>
<reference key="1">
    <citation type="submission" date="2007-02" db="EMBL/GenBank/DDBJ databases">
        <title>Complete sequence of chromosome of Shewanella baltica OS155.</title>
        <authorList>
            <consortium name="US DOE Joint Genome Institute"/>
            <person name="Copeland A."/>
            <person name="Lucas S."/>
            <person name="Lapidus A."/>
            <person name="Barry K."/>
            <person name="Detter J.C."/>
            <person name="Glavina del Rio T."/>
            <person name="Hammon N."/>
            <person name="Israni S."/>
            <person name="Dalin E."/>
            <person name="Tice H."/>
            <person name="Pitluck S."/>
            <person name="Sims D.R."/>
            <person name="Brettin T."/>
            <person name="Bruce D."/>
            <person name="Han C."/>
            <person name="Tapia R."/>
            <person name="Brainard J."/>
            <person name="Schmutz J."/>
            <person name="Larimer F."/>
            <person name="Land M."/>
            <person name="Hauser L."/>
            <person name="Kyrpides N."/>
            <person name="Mikhailova N."/>
            <person name="Brettar I."/>
            <person name="Klappenbach J."/>
            <person name="Konstantinidis K."/>
            <person name="Rodrigues J."/>
            <person name="Tiedje J."/>
            <person name="Richardson P."/>
        </authorList>
    </citation>
    <scope>NUCLEOTIDE SEQUENCE [LARGE SCALE GENOMIC DNA]</scope>
    <source>
        <strain>OS155 / ATCC BAA-1091</strain>
    </source>
</reference>
<dbReference type="EMBL" id="CP000563">
    <property type="protein sequence ID" value="ABN61887.1"/>
    <property type="molecule type" value="Genomic_DNA"/>
</dbReference>
<dbReference type="RefSeq" id="WP_011846946.1">
    <property type="nucleotide sequence ID" value="NC_009052.1"/>
</dbReference>
<dbReference type="SMR" id="A3D574"/>
<dbReference type="STRING" id="325240.Sbal_2394"/>
<dbReference type="KEGG" id="sbl:Sbal_2394"/>
<dbReference type="HOGENOM" id="CLU_068529_2_0_6"/>
<dbReference type="OrthoDB" id="287587at2"/>
<dbReference type="Proteomes" id="UP000001557">
    <property type="component" value="Chromosome"/>
</dbReference>
<dbReference type="GO" id="GO:1990230">
    <property type="term" value="C:iron-sulfur cluster transfer complex"/>
    <property type="evidence" value="ECO:0007669"/>
    <property type="project" value="TreeGrafter"/>
</dbReference>
<dbReference type="GO" id="GO:0001671">
    <property type="term" value="F:ATPase activator activity"/>
    <property type="evidence" value="ECO:0007669"/>
    <property type="project" value="InterPro"/>
</dbReference>
<dbReference type="GO" id="GO:0051087">
    <property type="term" value="F:protein-folding chaperone binding"/>
    <property type="evidence" value="ECO:0007669"/>
    <property type="project" value="InterPro"/>
</dbReference>
<dbReference type="GO" id="GO:0044571">
    <property type="term" value="P:[2Fe-2S] cluster assembly"/>
    <property type="evidence" value="ECO:0007669"/>
    <property type="project" value="InterPro"/>
</dbReference>
<dbReference type="GO" id="GO:0051259">
    <property type="term" value="P:protein complex oligomerization"/>
    <property type="evidence" value="ECO:0007669"/>
    <property type="project" value="InterPro"/>
</dbReference>
<dbReference type="GO" id="GO:0006457">
    <property type="term" value="P:protein folding"/>
    <property type="evidence" value="ECO:0007669"/>
    <property type="project" value="UniProtKB-UniRule"/>
</dbReference>
<dbReference type="CDD" id="cd06257">
    <property type="entry name" value="DnaJ"/>
    <property type="match status" value="1"/>
</dbReference>
<dbReference type="Gene3D" id="1.10.287.110">
    <property type="entry name" value="DnaJ domain"/>
    <property type="match status" value="1"/>
</dbReference>
<dbReference type="Gene3D" id="1.20.1280.20">
    <property type="entry name" value="HscB, C-terminal domain"/>
    <property type="match status" value="1"/>
</dbReference>
<dbReference type="HAMAP" id="MF_00682">
    <property type="entry name" value="HscB"/>
    <property type="match status" value="1"/>
</dbReference>
<dbReference type="InterPro" id="IPR001623">
    <property type="entry name" value="DnaJ_domain"/>
</dbReference>
<dbReference type="InterPro" id="IPR004640">
    <property type="entry name" value="HscB"/>
</dbReference>
<dbReference type="InterPro" id="IPR036386">
    <property type="entry name" value="HscB_C_sf"/>
</dbReference>
<dbReference type="InterPro" id="IPR009073">
    <property type="entry name" value="HscB_oligo_C"/>
</dbReference>
<dbReference type="InterPro" id="IPR036869">
    <property type="entry name" value="J_dom_sf"/>
</dbReference>
<dbReference type="NCBIfam" id="TIGR00714">
    <property type="entry name" value="hscB"/>
    <property type="match status" value="1"/>
</dbReference>
<dbReference type="NCBIfam" id="NF003449">
    <property type="entry name" value="PRK05014.1"/>
    <property type="match status" value="1"/>
</dbReference>
<dbReference type="PANTHER" id="PTHR14021">
    <property type="entry name" value="IRON-SULFUR CLUSTER CO-CHAPERONE PROTEIN HSCB"/>
    <property type="match status" value="1"/>
</dbReference>
<dbReference type="PANTHER" id="PTHR14021:SF15">
    <property type="entry name" value="IRON-SULFUR CLUSTER CO-CHAPERONE PROTEIN HSCB"/>
    <property type="match status" value="1"/>
</dbReference>
<dbReference type="Pfam" id="PF07743">
    <property type="entry name" value="HSCB_C"/>
    <property type="match status" value="1"/>
</dbReference>
<dbReference type="SMART" id="SM00271">
    <property type="entry name" value="DnaJ"/>
    <property type="match status" value="1"/>
</dbReference>
<dbReference type="SUPFAM" id="SSF46565">
    <property type="entry name" value="Chaperone J-domain"/>
    <property type="match status" value="1"/>
</dbReference>
<dbReference type="SUPFAM" id="SSF47144">
    <property type="entry name" value="HSC20 (HSCB), C-terminal oligomerisation domain"/>
    <property type="match status" value="1"/>
</dbReference>
<dbReference type="PROSITE" id="PS50076">
    <property type="entry name" value="DNAJ_2"/>
    <property type="match status" value="1"/>
</dbReference>